<accession>Q3E9C0</accession>
<feature type="initiator methionine" description="Removed" evidence="3">
    <location>
        <position position="1"/>
    </location>
</feature>
<feature type="chain" id="PRO_0000363355" description="Calcium-dependent protein kinase 34">
    <location>
        <begin position="2"/>
        <end position="523"/>
    </location>
</feature>
<feature type="domain" description="Protein kinase" evidence="4">
    <location>
        <begin position="68"/>
        <end position="326"/>
    </location>
</feature>
<feature type="domain" description="EF-hand 1" evidence="5">
    <location>
        <begin position="369"/>
        <end position="404"/>
    </location>
</feature>
<feature type="domain" description="EF-hand 2" evidence="5">
    <location>
        <begin position="405"/>
        <end position="440"/>
    </location>
</feature>
<feature type="domain" description="EF-hand 3" evidence="5">
    <location>
        <begin position="441"/>
        <end position="476"/>
    </location>
</feature>
<feature type="domain" description="EF-hand 4" evidence="5">
    <location>
        <begin position="480"/>
        <end position="511"/>
    </location>
</feature>
<feature type="region of interest" description="Disordered" evidence="7">
    <location>
        <begin position="1"/>
        <end position="60"/>
    </location>
</feature>
<feature type="region of interest" description="Autoinhibitory domain" evidence="1">
    <location>
        <begin position="332"/>
        <end position="362"/>
    </location>
</feature>
<feature type="compositionally biased region" description="Basic and acidic residues" evidence="7">
    <location>
        <begin position="7"/>
        <end position="20"/>
    </location>
</feature>
<feature type="active site" description="Proton acceptor" evidence="4 6">
    <location>
        <position position="192"/>
    </location>
</feature>
<feature type="binding site" evidence="4">
    <location>
        <begin position="74"/>
        <end position="82"/>
    </location>
    <ligand>
        <name>ATP</name>
        <dbReference type="ChEBI" id="CHEBI:30616"/>
    </ligand>
</feature>
<feature type="binding site" evidence="4">
    <location>
        <position position="97"/>
    </location>
    <ligand>
        <name>ATP</name>
        <dbReference type="ChEBI" id="CHEBI:30616"/>
    </ligand>
</feature>
<feature type="binding site" evidence="5">
    <location>
        <position position="382"/>
    </location>
    <ligand>
        <name>Ca(2+)</name>
        <dbReference type="ChEBI" id="CHEBI:29108"/>
        <label>1</label>
    </ligand>
</feature>
<feature type="binding site" evidence="5">
    <location>
        <position position="384"/>
    </location>
    <ligand>
        <name>Ca(2+)</name>
        <dbReference type="ChEBI" id="CHEBI:29108"/>
        <label>1</label>
    </ligand>
</feature>
<feature type="binding site" evidence="5">
    <location>
        <position position="386"/>
    </location>
    <ligand>
        <name>Ca(2+)</name>
        <dbReference type="ChEBI" id="CHEBI:29108"/>
        <label>1</label>
    </ligand>
</feature>
<feature type="binding site" evidence="5">
    <location>
        <position position="388"/>
    </location>
    <ligand>
        <name>Ca(2+)</name>
        <dbReference type="ChEBI" id="CHEBI:29108"/>
        <label>1</label>
    </ligand>
</feature>
<feature type="binding site" evidence="5">
    <location>
        <position position="393"/>
    </location>
    <ligand>
        <name>Ca(2+)</name>
        <dbReference type="ChEBI" id="CHEBI:29108"/>
        <label>1</label>
    </ligand>
</feature>
<feature type="binding site" evidence="5">
    <location>
        <position position="418"/>
    </location>
    <ligand>
        <name>Ca(2+)</name>
        <dbReference type="ChEBI" id="CHEBI:29108"/>
        <label>2</label>
    </ligand>
</feature>
<feature type="binding site" evidence="5">
    <location>
        <position position="420"/>
    </location>
    <ligand>
        <name>Ca(2+)</name>
        <dbReference type="ChEBI" id="CHEBI:29108"/>
        <label>2</label>
    </ligand>
</feature>
<feature type="binding site" evidence="5">
    <location>
        <position position="422"/>
    </location>
    <ligand>
        <name>Ca(2+)</name>
        <dbReference type="ChEBI" id="CHEBI:29108"/>
        <label>2</label>
    </ligand>
</feature>
<feature type="binding site" evidence="5">
    <location>
        <position position="424"/>
    </location>
    <ligand>
        <name>Ca(2+)</name>
        <dbReference type="ChEBI" id="CHEBI:29108"/>
        <label>2</label>
    </ligand>
</feature>
<feature type="binding site" evidence="5">
    <location>
        <position position="429"/>
    </location>
    <ligand>
        <name>Ca(2+)</name>
        <dbReference type="ChEBI" id="CHEBI:29108"/>
        <label>2</label>
    </ligand>
</feature>
<feature type="binding site" evidence="5">
    <location>
        <position position="454"/>
    </location>
    <ligand>
        <name>Ca(2+)</name>
        <dbReference type="ChEBI" id="CHEBI:29108"/>
        <label>3</label>
    </ligand>
</feature>
<feature type="binding site" evidence="5">
    <location>
        <position position="456"/>
    </location>
    <ligand>
        <name>Ca(2+)</name>
        <dbReference type="ChEBI" id="CHEBI:29108"/>
        <label>3</label>
    </ligand>
</feature>
<feature type="binding site" evidence="5">
    <location>
        <position position="458"/>
    </location>
    <ligand>
        <name>Ca(2+)</name>
        <dbReference type="ChEBI" id="CHEBI:29108"/>
        <label>3</label>
    </ligand>
</feature>
<feature type="binding site" evidence="5">
    <location>
        <position position="460"/>
    </location>
    <ligand>
        <name>Ca(2+)</name>
        <dbReference type="ChEBI" id="CHEBI:29108"/>
        <label>3</label>
    </ligand>
</feature>
<feature type="binding site" evidence="5">
    <location>
        <position position="465"/>
    </location>
    <ligand>
        <name>Ca(2+)</name>
        <dbReference type="ChEBI" id="CHEBI:29108"/>
        <label>3</label>
    </ligand>
</feature>
<feature type="binding site" evidence="5">
    <location>
        <position position="489"/>
    </location>
    <ligand>
        <name>Ca(2+)</name>
        <dbReference type="ChEBI" id="CHEBI:29108"/>
        <label>4</label>
    </ligand>
</feature>
<feature type="binding site" evidence="5">
    <location>
        <position position="491"/>
    </location>
    <ligand>
        <name>Ca(2+)</name>
        <dbReference type="ChEBI" id="CHEBI:29108"/>
        <label>4</label>
    </ligand>
</feature>
<feature type="binding site" evidence="5">
    <location>
        <position position="493"/>
    </location>
    <ligand>
        <name>Ca(2+)</name>
        <dbReference type="ChEBI" id="CHEBI:29108"/>
        <label>4</label>
    </ligand>
</feature>
<feature type="binding site" evidence="5">
    <location>
        <position position="495"/>
    </location>
    <ligand>
        <name>Ca(2+)</name>
        <dbReference type="ChEBI" id="CHEBI:29108"/>
        <label>4</label>
    </ligand>
</feature>
<feature type="binding site" evidence="5">
    <location>
        <position position="500"/>
    </location>
    <ligand>
        <name>Ca(2+)</name>
        <dbReference type="ChEBI" id="CHEBI:29108"/>
        <label>4</label>
    </ligand>
</feature>
<feature type="modified residue" description="Phosphoserine" evidence="2">
    <location>
        <position position="232"/>
    </location>
</feature>
<feature type="lipid moiety-binding region" description="N-myristoyl glycine" evidence="3">
    <location>
        <position position="2"/>
    </location>
</feature>
<protein>
    <recommendedName>
        <fullName>Calcium-dependent protein kinase 34</fullName>
        <ecNumber>2.7.11.1</ecNumber>
    </recommendedName>
</protein>
<sequence length="523" mass="58174">MGNCCSHGRDSDDNKEEPRPENGGGGVGAAEASVRASKHPPASPPPATKQGPIGPVLGRPMEDVKSSYTLGKELGRGQFGVTHLCTQKATGLQFACKTIAKRKLVNKEDIEDVRREVQIMHHLTGQPNIVELKGAYEDKHSVHLVMELCAGGELFDRIIAKGHYSERAAASLLRTIVQIIHTCHSMGVIHRDLKPENFLLLSKDENSPLKATDFGLSVFYKPGEVFKDIVGSAYYIAPEVLRRKYGPEADIWSIGVMLYILLCGVPPFWAESENGIFNAILSGQVDFSSDPWPVISPQAKDLVRKMLNSDPKQRLTAAQVLNHPWIKEDGEAPDVPLDNAVMSRLKQFKAMNNFKKVALRVIAGCLSEEEIMGLKEMFKGMDTDNSGTITLEELRQGLAKQGTRLSEYEVQQLMEAADADGNGTIDYGEFIAATMHINRLDREEHLYSAFQHFDKDNSGYITTEELEQALREFGMNDGRDIKEIISEVDGDNDGRINYEEFVAMMRKGNPDPNPKKRRELSFK</sequence>
<comment type="function">
    <text>May play a role in signal transduction pathways that involve calcium as a second messenger.</text>
</comment>
<comment type="catalytic activity">
    <reaction>
        <text>L-seryl-[protein] + ATP = O-phospho-L-seryl-[protein] + ADP + H(+)</text>
        <dbReference type="Rhea" id="RHEA:17989"/>
        <dbReference type="Rhea" id="RHEA-COMP:9863"/>
        <dbReference type="Rhea" id="RHEA-COMP:11604"/>
        <dbReference type="ChEBI" id="CHEBI:15378"/>
        <dbReference type="ChEBI" id="CHEBI:29999"/>
        <dbReference type="ChEBI" id="CHEBI:30616"/>
        <dbReference type="ChEBI" id="CHEBI:83421"/>
        <dbReference type="ChEBI" id="CHEBI:456216"/>
        <dbReference type="EC" id="2.7.11.1"/>
    </reaction>
</comment>
<comment type="catalytic activity">
    <reaction>
        <text>L-threonyl-[protein] + ATP = O-phospho-L-threonyl-[protein] + ADP + H(+)</text>
        <dbReference type="Rhea" id="RHEA:46608"/>
        <dbReference type="Rhea" id="RHEA-COMP:11060"/>
        <dbReference type="Rhea" id="RHEA-COMP:11605"/>
        <dbReference type="ChEBI" id="CHEBI:15378"/>
        <dbReference type="ChEBI" id="CHEBI:30013"/>
        <dbReference type="ChEBI" id="CHEBI:30616"/>
        <dbReference type="ChEBI" id="CHEBI:61977"/>
        <dbReference type="ChEBI" id="CHEBI:456216"/>
        <dbReference type="EC" id="2.7.11.1"/>
    </reaction>
</comment>
<comment type="activity regulation">
    <text evidence="1">Activated by calcium. Autophosphorylation may play an important role in the regulation of the kinase activity (By similarity).</text>
</comment>
<comment type="subcellular location">
    <subcellularLocation>
        <location evidence="8">Membrane</location>
        <topology evidence="8">Lipid-anchor</topology>
    </subcellularLocation>
</comment>
<comment type="domain">
    <text evidence="1">There are 3 contiguous domains conserved in the CDPK subfamily: a kinase domain, an autoinhibitory (junction) domain and a calmodulin-like domain. The autoinhibitory domain (332-362) inactivates kinase activity under calcium-free conditions (By similarity).</text>
</comment>
<comment type="similarity">
    <text evidence="4">Belongs to the protein kinase superfamily. Ser/Thr protein kinase family. CDPK subfamily.</text>
</comment>
<keyword id="KW-0067">ATP-binding</keyword>
<keyword id="KW-0106">Calcium</keyword>
<keyword id="KW-0418">Kinase</keyword>
<keyword id="KW-0449">Lipoprotein</keyword>
<keyword id="KW-0472">Membrane</keyword>
<keyword id="KW-0479">Metal-binding</keyword>
<keyword id="KW-0519">Myristate</keyword>
<keyword id="KW-0547">Nucleotide-binding</keyword>
<keyword id="KW-0597">Phosphoprotein</keyword>
<keyword id="KW-1185">Reference proteome</keyword>
<keyword id="KW-0677">Repeat</keyword>
<keyword id="KW-0723">Serine/threonine-protein kinase</keyword>
<keyword id="KW-0808">Transferase</keyword>
<dbReference type="EC" id="2.7.11.1"/>
<dbReference type="EMBL" id="AF296837">
    <property type="status" value="NOT_ANNOTATED_CDS"/>
    <property type="molecule type" value="Genomic_DNA"/>
</dbReference>
<dbReference type="EMBL" id="CP002688">
    <property type="protein sequence ID" value="AED92691.1"/>
    <property type="molecule type" value="Genomic_DNA"/>
</dbReference>
<dbReference type="EMBL" id="DQ446970">
    <property type="protein sequence ID" value="ABE66169.1"/>
    <property type="molecule type" value="mRNA"/>
</dbReference>
<dbReference type="RefSeq" id="NP_197437.1">
    <property type="nucleotide sequence ID" value="NM_121941.2"/>
</dbReference>
<dbReference type="SMR" id="Q3E9C0"/>
<dbReference type="FunCoup" id="Q3E9C0">
    <property type="interactions" value="1001"/>
</dbReference>
<dbReference type="STRING" id="3702.Q3E9C0"/>
<dbReference type="iPTMnet" id="Q3E9C0"/>
<dbReference type="PaxDb" id="3702-AT5G19360.1"/>
<dbReference type="ProteomicsDB" id="224478"/>
<dbReference type="EnsemblPlants" id="AT5G19360.1">
    <property type="protein sequence ID" value="AT5G19360.1"/>
    <property type="gene ID" value="AT5G19360"/>
</dbReference>
<dbReference type="GeneID" id="832056"/>
<dbReference type="Gramene" id="AT5G19360.1">
    <property type="protein sequence ID" value="AT5G19360.1"/>
    <property type="gene ID" value="AT5G19360"/>
</dbReference>
<dbReference type="KEGG" id="ath:AT5G19360"/>
<dbReference type="Araport" id="AT5G19360"/>
<dbReference type="TAIR" id="AT5G19360">
    <property type="gene designation" value="CPK34"/>
</dbReference>
<dbReference type="eggNOG" id="KOG0032">
    <property type="taxonomic scope" value="Eukaryota"/>
</dbReference>
<dbReference type="HOGENOM" id="CLU_000288_37_4_1"/>
<dbReference type="InParanoid" id="Q3E9C0"/>
<dbReference type="OMA" id="CCSKAET"/>
<dbReference type="PhylomeDB" id="Q3E9C0"/>
<dbReference type="PRO" id="PR:Q3E9C0"/>
<dbReference type="Proteomes" id="UP000006548">
    <property type="component" value="Chromosome 5"/>
</dbReference>
<dbReference type="ExpressionAtlas" id="Q3E9C0">
    <property type="expression patterns" value="baseline and differential"/>
</dbReference>
<dbReference type="GO" id="GO:0005737">
    <property type="term" value="C:cytoplasm"/>
    <property type="evidence" value="ECO:0000314"/>
    <property type="project" value="TAIR"/>
</dbReference>
<dbReference type="GO" id="GO:0005886">
    <property type="term" value="C:plasma membrane"/>
    <property type="evidence" value="ECO:0000314"/>
    <property type="project" value="TAIR"/>
</dbReference>
<dbReference type="GO" id="GO:0005524">
    <property type="term" value="F:ATP binding"/>
    <property type="evidence" value="ECO:0007669"/>
    <property type="project" value="UniProtKB-KW"/>
</dbReference>
<dbReference type="GO" id="GO:0005509">
    <property type="term" value="F:calcium ion binding"/>
    <property type="evidence" value="ECO:0007669"/>
    <property type="project" value="InterPro"/>
</dbReference>
<dbReference type="GO" id="GO:0004672">
    <property type="term" value="F:protein kinase activity"/>
    <property type="evidence" value="ECO:0000314"/>
    <property type="project" value="TAIR"/>
</dbReference>
<dbReference type="GO" id="GO:0106310">
    <property type="term" value="F:protein serine kinase activity"/>
    <property type="evidence" value="ECO:0007669"/>
    <property type="project" value="RHEA"/>
</dbReference>
<dbReference type="GO" id="GO:0004674">
    <property type="term" value="F:protein serine/threonine kinase activity"/>
    <property type="evidence" value="ECO:0007669"/>
    <property type="project" value="UniProtKB-KW"/>
</dbReference>
<dbReference type="GO" id="GO:0080092">
    <property type="term" value="P:regulation of pollen tube growth"/>
    <property type="evidence" value="ECO:0000315"/>
    <property type="project" value="TAIR"/>
</dbReference>
<dbReference type="CDD" id="cd05117">
    <property type="entry name" value="STKc_CAMK"/>
    <property type="match status" value="1"/>
</dbReference>
<dbReference type="FunFam" id="1.10.238.10:FF:000015">
    <property type="entry name" value="Calcium-dependent protein kinase 1"/>
    <property type="match status" value="1"/>
</dbReference>
<dbReference type="FunFam" id="3.30.200.20:FF:000004">
    <property type="entry name" value="Calcium-dependent protein kinase 1"/>
    <property type="match status" value="1"/>
</dbReference>
<dbReference type="FunFam" id="1.10.510.10:FF:000056">
    <property type="entry name" value="calcium-dependent protein kinase 1"/>
    <property type="match status" value="1"/>
</dbReference>
<dbReference type="Gene3D" id="1.10.238.10">
    <property type="entry name" value="EF-hand"/>
    <property type="match status" value="1"/>
</dbReference>
<dbReference type="Gene3D" id="3.30.200.20">
    <property type="entry name" value="Phosphorylase Kinase, domain 1"/>
    <property type="match status" value="1"/>
</dbReference>
<dbReference type="Gene3D" id="1.10.510.10">
    <property type="entry name" value="Transferase(Phosphotransferase) domain 1"/>
    <property type="match status" value="1"/>
</dbReference>
<dbReference type="InterPro" id="IPR050205">
    <property type="entry name" value="CDPK_Ser/Thr_kinases"/>
</dbReference>
<dbReference type="InterPro" id="IPR011992">
    <property type="entry name" value="EF-hand-dom_pair"/>
</dbReference>
<dbReference type="InterPro" id="IPR018247">
    <property type="entry name" value="EF_Hand_1_Ca_BS"/>
</dbReference>
<dbReference type="InterPro" id="IPR002048">
    <property type="entry name" value="EF_hand_dom"/>
</dbReference>
<dbReference type="InterPro" id="IPR011009">
    <property type="entry name" value="Kinase-like_dom_sf"/>
</dbReference>
<dbReference type="InterPro" id="IPR000719">
    <property type="entry name" value="Prot_kinase_dom"/>
</dbReference>
<dbReference type="InterPro" id="IPR017441">
    <property type="entry name" value="Protein_kinase_ATP_BS"/>
</dbReference>
<dbReference type="InterPro" id="IPR008271">
    <property type="entry name" value="Ser/Thr_kinase_AS"/>
</dbReference>
<dbReference type="PANTHER" id="PTHR24349">
    <property type="entry name" value="SERINE/THREONINE-PROTEIN KINASE"/>
    <property type="match status" value="1"/>
</dbReference>
<dbReference type="Pfam" id="PF13499">
    <property type="entry name" value="EF-hand_7"/>
    <property type="match status" value="2"/>
</dbReference>
<dbReference type="Pfam" id="PF00069">
    <property type="entry name" value="Pkinase"/>
    <property type="match status" value="1"/>
</dbReference>
<dbReference type="SMART" id="SM00054">
    <property type="entry name" value="EFh"/>
    <property type="match status" value="4"/>
</dbReference>
<dbReference type="SMART" id="SM00220">
    <property type="entry name" value="S_TKc"/>
    <property type="match status" value="1"/>
</dbReference>
<dbReference type="SUPFAM" id="SSF47473">
    <property type="entry name" value="EF-hand"/>
    <property type="match status" value="1"/>
</dbReference>
<dbReference type="SUPFAM" id="SSF56112">
    <property type="entry name" value="Protein kinase-like (PK-like)"/>
    <property type="match status" value="1"/>
</dbReference>
<dbReference type="PROSITE" id="PS00018">
    <property type="entry name" value="EF_HAND_1"/>
    <property type="match status" value="4"/>
</dbReference>
<dbReference type="PROSITE" id="PS50222">
    <property type="entry name" value="EF_HAND_2"/>
    <property type="match status" value="4"/>
</dbReference>
<dbReference type="PROSITE" id="PS00107">
    <property type="entry name" value="PROTEIN_KINASE_ATP"/>
    <property type="match status" value="1"/>
</dbReference>
<dbReference type="PROSITE" id="PS50011">
    <property type="entry name" value="PROTEIN_KINASE_DOM"/>
    <property type="match status" value="1"/>
</dbReference>
<dbReference type="PROSITE" id="PS00108">
    <property type="entry name" value="PROTEIN_KINASE_ST"/>
    <property type="match status" value="1"/>
</dbReference>
<name>CDPKY_ARATH</name>
<evidence type="ECO:0000250" key="1"/>
<evidence type="ECO:0000250" key="2">
    <source>
        <dbReference type="UniProtKB" id="Q9FKW4"/>
    </source>
</evidence>
<evidence type="ECO:0000255" key="3"/>
<evidence type="ECO:0000255" key="4">
    <source>
        <dbReference type="PROSITE-ProRule" id="PRU00159"/>
    </source>
</evidence>
<evidence type="ECO:0000255" key="5">
    <source>
        <dbReference type="PROSITE-ProRule" id="PRU00448"/>
    </source>
</evidence>
<evidence type="ECO:0000255" key="6">
    <source>
        <dbReference type="PROSITE-ProRule" id="PRU10027"/>
    </source>
</evidence>
<evidence type="ECO:0000256" key="7">
    <source>
        <dbReference type="SAM" id="MobiDB-lite"/>
    </source>
</evidence>
<evidence type="ECO:0000305" key="8"/>
<proteinExistence type="evidence at transcript level"/>
<gene>
    <name type="primary">CPK34</name>
    <name type="ordered locus">At5g19360</name>
    <name type="ORF">F7K24.110</name>
</gene>
<organism>
    <name type="scientific">Arabidopsis thaliana</name>
    <name type="common">Mouse-ear cress</name>
    <dbReference type="NCBI Taxonomy" id="3702"/>
    <lineage>
        <taxon>Eukaryota</taxon>
        <taxon>Viridiplantae</taxon>
        <taxon>Streptophyta</taxon>
        <taxon>Embryophyta</taxon>
        <taxon>Tracheophyta</taxon>
        <taxon>Spermatophyta</taxon>
        <taxon>Magnoliopsida</taxon>
        <taxon>eudicotyledons</taxon>
        <taxon>Gunneridae</taxon>
        <taxon>Pentapetalae</taxon>
        <taxon>rosids</taxon>
        <taxon>malvids</taxon>
        <taxon>Brassicales</taxon>
        <taxon>Brassicaceae</taxon>
        <taxon>Camelineae</taxon>
        <taxon>Arabidopsis</taxon>
    </lineage>
</organism>
<reference key="1">
    <citation type="journal article" date="2000" name="Nature">
        <title>Sequence and analysis of chromosome 5 of the plant Arabidopsis thaliana.</title>
        <authorList>
            <person name="Tabata S."/>
            <person name="Kaneko T."/>
            <person name="Nakamura Y."/>
            <person name="Kotani H."/>
            <person name="Kato T."/>
            <person name="Asamizu E."/>
            <person name="Miyajima N."/>
            <person name="Sasamoto S."/>
            <person name="Kimura T."/>
            <person name="Hosouchi T."/>
            <person name="Kawashima K."/>
            <person name="Kohara M."/>
            <person name="Matsumoto M."/>
            <person name="Matsuno A."/>
            <person name="Muraki A."/>
            <person name="Nakayama S."/>
            <person name="Nakazaki N."/>
            <person name="Naruo K."/>
            <person name="Okumura S."/>
            <person name="Shinpo S."/>
            <person name="Takeuchi C."/>
            <person name="Wada T."/>
            <person name="Watanabe A."/>
            <person name="Yamada M."/>
            <person name="Yasuda M."/>
            <person name="Sato S."/>
            <person name="de la Bastide M."/>
            <person name="Huang E."/>
            <person name="Spiegel L."/>
            <person name="Gnoj L."/>
            <person name="O'Shaughnessy A."/>
            <person name="Preston R."/>
            <person name="Habermann K."/>
            <person name="Murray J."/>
            <person name="Johnson D."/>
            <person name="Rohlfing T."/>
            <person name="Nelson J."/>
            <person name="Stoneking T."/>
            <person name="Pepin K."/>
            <person name="Spieth J."/>
            <person name="Sekhon M."/>
            <person name="Armstrong J."/>
            <person name="Becker M."/>
            <person name="Belter E."/>
            <person name="Cordum H."/>
            <person name="Cordes M."/>
            <person name="Courtney L."/>
            <person name="Courtney W."/>
            <person name="Dante M."/>
            <person name="Du H."/>
            <person name="Edwards J."/>
            <person name="Fryman J."/>
            <person name="Haakensen B."/>
            <person name="Lamar E."/>
            <person name="Latreille P."/>
            <person name="Leonard S."/>
            <person name="Meyer R."/>
            <person name="Mulvaney E."/>
            <person name="Ozersky P."/>
            <person name="Riley A."/>
            <person name="Strowmatt C."/>
            <person name="Wagner-McPherson C."/>
            <person name="Wollam A."/>
            <person name="Yoakum M."/>
            <person name="Bell M."/>
            <person name="Dedhia N."/>
            <person name="Parnell L."/>
            <person name="Shah R."/>
            <person name="Rodriguez M."/>
            <person name="Hoon See L."/>
            <person name="Vil D."/>
            <person name="Baker J."/>
            <person name="Kirchoff K."/>
            <person name="Toth K."/>
            <person name="King L."/>
            <person name="Bahret A."/>
            <person name="Miller B."/>
            <person name="Marra M.A."/>
            <person name="Martienssen R."/>
            <person name="McCombie W.R."/>
            <person name="Wilson R.K."/>
            <person name="Murphy G."/>
            <person name="Bancroft I."/>
            <person name="Volckaert G."/>
            <person name="Wambutt R."/>
            <person name="Duesterhoeft A."/>
            <person name="Stiekema W."/>
            <person name="Pohl T."/>
            <person name="Entian K.-D."/>
            <person name="Terryn N."/>
            <person name="Hartley N."/>
            <person name="Bent E."/>
            <person name="Johnson S."/>
            <person name="Langham S.-A."/>
            <person name="McCullagh B."/>
            <person name="Robben J."/>
            <person name="Grymonprez B."/>
            <person name="Zimmermann W."/>
            <person name="Ramsperger U."/>
            <person name="Wedler H."/>
            <person name="Balke K."/>
            <person name="Wedler E."/>
            <person name="Peters S."/>
            <person name="van Staveren M."/>
            <person name="Dirkse W."/>
            <person name="Mooijman P."/>
            <person name="Klein Lankhorst R."/>
            <person name="Weitzenegger T."/>
            <person name="Bothe G."/>
            <person name="Rose M."/>
            <person name="Hauf J."/>
            <person name="Berneiser S."/>
            <person name="Hempel S."/>
            <person name="Feldpausch M."/>
            <person name="Lamberth S."/>
            <person name="Villarroel R."/>
            <person name="Gielen J."/>
            <person name="Ardiles W."/>
            <person name="Bents O."/>
            <person name="Lemcke K."/>
            <person name="Kolesov G."/>
            <person name="Mayer K.F.X."/>
            <person name="Rudd S."/>
            <person name="Schoof H."/>
            <person name="Schueller C."/>
            <person name="Zaccaria P."/>
            <person name="Mewes H.-W."/>
            <person name="Bevan M."/>
            <person name="Fransz P.F."/>
        </authorList>
    </citation>
    <scope>NUCLEOTIDE SEQUENCE [LARGE SCALE GENOMIC DNA]</scope>
    <source>
        <strain>cv. Columbia</strain>
    </source>
</reference>
<reference key="2">
    <citation type="journal article" date="2017" name="Plant J.">
        <title>Araport11: a complete reannotation of the Arabidopsis thaliana reference genome.</title>
        <authorList>
            <person name="Cheng C.Y."/>
            <person name="Krishnakumar V."/>
            <person name="Chan A.P."/>
            <person name="Thibaud-Nissen F."/>
            <person name="Schobel S."/>
            <person name="Town C.D."/>
        </authorList>
    </citation>
    <scope>GENOME REANNOTATION</scope>
    <source>
        <strain>cv. Columbia</strain>
    </source>
</reference>
<reference key="3">
    <citation type="journal article" date="2006" name="Plant Biotechnol. J.">
        <title>Simultaneous high-throughput recombinational cloning of open reading frames in closed and open configurations.</title>
        <authorList>
            <person name="Underwood B.A."/>
            <person name="Vanderhaeghen R."/>
            <person name="Whitford R."/>
            <person name="Town C.D."/>
            <person name="Hilson P."/>
        </authorList>
    </citation>
    <scope>NUCLEOTIDE SEQUENCE [LARGE SCALE MRNA]</scope>
    <source>
        <strain>cv. Columbia</strain>
    </source>
</reference>
<reference key="4">
    <citation type="journal article" date="2001" name="New Phytol.">
        <title>The CDPK superfamily of protein kinases.</title>
        <authorList>
            <person name="Harmon A.C."/>
            <person name="Gribskov M."/>
            <person name="Gubrium E."/>
            <person name="Harper J.F."/>
        </authorList>
    </citation>
    <scope>GENE FAMILY</scope>
    <scope>NOMENCLATURE</scope>
</reference>
<reference key="5">
    <citation type="journal article" date="2002" name="Plant Physiol.">
        <title>Calcium signaling through protein kinases. The Arabidopsis calcium-dependent protein kinase gene family.</title>
        <authorList>
            <person name="Cheng S.-H."/>
            <person name="Willmann M.R."/>
            <person name="Chen H.-C."/>
            <person name="Sheen J."/>
        </authorList>
    </citation>
    <scope>GENE FAMILY</scope>
    <scope>NOMENCLATURE</scope>
</reference>
<reference key="6">
    <citation type="journal article" date="2003" name="Plant Physiol.">
        <title>The Arabidopsis CDPK-SnRK superfamily of protein kinases.</title>
        <authorList>
            <person name="Hrabak E.M."/>
            <person name="Chan C.W.M."/>
            <person name="Gribskov M."/>
            <person name="Harper J.F."/>
            <person name="Choi J.H."/>
            <person name="Halford N."/>
            <person name="Kudla J."/>
            <person name="Luan S."/>
            <person name="Nimmo H.G."/>
            <person name="Sussman M.R."/>
            <person name="Thomas M."/>
            <person name="Walker-Simmons K."/>
            <person name="Zhu J.-K."/>
            <person name="Harmon A.C."/>
        </authorList>
    </citation>
    <scope>GENE FAMILY</scope>
    <scope>NOMENCLATURE</scope>
</reference>